<sequence>MSRIGKHPAIALLDSGITFKEVRQIHAKLYVDGTLKDDHLVGHFVKAVALSDHKYLDYANQILDRSEKPTLFALNSMIRAHCKSPVPEKSFDFYRRILSSGNDLKPDNYTVNFLVQACTGLRMRETGLQVHGMTIRRGFDNDPHVQTGLISLYAELGCLDSCHKVFNSIPCPDFVCRTAMVTACARCGDVVFARKLFEGMPERDPIAWNAMISGYAQVGESREALNVFHLMQLEGVKVNGVAMISVLSACTQLGALDQGRWAHSYIERNKIKITVRLATTLVDLYAKCGDMEKAMEVFWGMEEKNVYTWSSALNGLAMNGFGEKCLELFSLMKQDGVTPNAVTFVSVLRGCSVVGFVDEGQRHFDSMRNEFGIEPQLEHYGCLVDLYARAGRLEDAVSIIQQMPMKPHAAVWSSLLHASRMYKNLELGVLASKKMLELETANHGAYVLLSNIYADSNDWDNVSHVRQSMKSKGVRKQPGCSVMEVNGEVHEFFVGDKSHPKYTQIDAVWKDISRRLRLAGYKADTTPVMFDIDEEEKEDALCLHSEKAAIAFGIMSLKEDVPIRIVKNLRVCGDCHQVSMMISKIFNREIIVRDRNRFHHFKDGHCSCNGFW</sequence>
<comment type="similarity">
    <text evidence="1">Belongs to the PPR family. PCMP-H subfamily.</text>
</comment>
<comment type="online information" name="Pentatricopeptide repeat proteins">
    <link uri="https://ppr.plantenergy.uwa.edu.au"/>
</comment>
<evidence type="ECO:0000305" key="1"/>
<protein>
    <recommendedName>
        <fullName>Putative pentatricopeptide repeat-containing protein At5g40405</fullName>
    </recommendedName>
</protein>
<proteinExistence type="inferred from homology"/>
<keyword id="KW-1185">Reference proteome</keyword>
<keyword id="KW-0677">Repeat</keyword>
<organism>
    <name type="scientific">Arabidopsis thaliana</name>
    <name type="common">Mouse-ear cress</name>
    <dbReference type="NCBI Taxonomy" id="3702"/>
    <lineage>
        <taxon>Eukaryota</taxon>
        <taxon>Viridiplantae</taxon>
        <taxon>Streptophyta</taxon>
        <taxon>Embryophyta</taxon>
        <taxon>Tracheophyta</taxon>
        <taxon>Spermatophyta</taxon>
        <taxon>Magnoliopsida</taxon>
        <taxon>eudicotyledons</taxon>
        <taxon>Gunneridae</taxon>
        <taxon>Pentapetalae</taxon>
        <taxon>rosids</taxon>
        <taxon>malvids</taxon>
        <taxon>Brassicales</taxon>
        <taxon>Brassicaceae</taxon>
        <taxon>Camelineae</taxon>
        <taxon>Arabidopsis</taxon>
    </lineage>
</organism>
<reference key="1">
    <citation type="journal article" date="1997" name="DNA Res.">
        <title>Structural analysis of Arabidopsis thaliana chromosome 5. II. Sequence features of the regions of 1,044,062 bp covered by thirteen physically assigned P1 clones.</title>
        <authorList>
            <person name="Kotani H."/>
            <person name="Nakamura Y."/>
            <person name="Sato S."/>
            <person name="Kaneko T."/>
            <person name="Asamizu E."/>
            <person name="Miyajima N."/>
            <person name="Tabata S."/>
        </authorList>
    </citation>
    <scope>NUCLEOTIDE SEQUENCE [LARGE SCALE GENOMIC DNA]</scope>
    <source>
        <strain>cv. Columbia</strain>
    </source>
</reference>
<reference key="2">
    <citation type="journal article" date="2017" name="Plant J.">
        <title>Araport11: a complete reannotation of the Arabidopsis thaliana reference genome.</title>
        <authorList>
            <person name="Cheng C.Y."/>
            <person name="Krishnakumar V."/>
            <person name="Chan A.P."/>
            <person name="Thibaud-Nissen F."/>
            <person name="Schobel S."/>
            <person name="Town C.D."/>
        </authorList>
    </citation>
    <scope>GENOME REANNOTATION</scope>
    <source>
        <strain>cv. Columbia</strain>
    </source>
</reference>
<reference key="3">
    <citation type="journal article" date="2000" name="Plant Mol. Biol.">
        <title>In Arabidopsis thaliana, 1% of the genome codes for a novel protein family unique to plants.</title>
        <authorList>
            <person name="Aubourg S."/>
            <person name="Boudet N."/>
            <person name="Kreis M."/>
            <person name="Lecharny A."/>
        </authorList>
    </citation>
    <scope>GENE FAMILY</scope>
</reference>
<reference key="4">
    <citation type="journal article" date="2004" name="Plant Cell">
        <title>Genome-wide analysis of Arabidopsis pentatricopeptide repeat proteins reveals their essential role in organelle biogenesis.</title>
        <authorList>
            <person name="Lurin C."/>
            <person name="Andres C."/>
            <person name="Aubourg S."/>
            <person name="Bellaoui M."/>
            <person name="Bitton F."/>
            <person name="Bruyere C."/>
            <person name="Caboche M."/>
            <person name="Debast C."/>
            <person name="Gualberto J."/>
            <person name="Hoffmann B."/>
            <person name="Lecharny A."/>
            <person name="Le Ret M."/>
            <person name="Martin-Magniette M.-L."/>
            <person name="Mireau H."/>
            <person name="Peeters N."/>
            <person name="Renou J.-P."/>
            <person name="Szurek B."/>
            <person name="Taconnat L."/>
            <person name="Small I."/>
        </authorList>
    </citation>
    <scope>GENE FAMILY</scope>
</reference>
<gene>
    <name type="primary">PCMP-H14</name>
    <name type="ordered locus">At5g40405</name>
    <name type="ORF">MPO12</name>
</gene>
<feature type="chain" id="PRO_0000363547" description="Putative pentatricopeptide repeat-containing protein At5g40405">
    <location>
        <begin position="1"/>
        <end position="612"/>
    </location>
</feature>
<feature type="repeat" description="PPR 1">
    <location>
        <begin position="70"/>
        <end position="104"/>
    </location>
</feature>
<feature type="repeat" description="PPR 2">
    <location>
        <begin position="107"/>
        <end position="141"/>
    </location>
</feature>
<feature type="repeat" description="PPR 3">
    <location>
        <begin position="142"/>
        <end position="172"/>
    </location>
</feature>
<feature type="repeat" description="PPR 4">
    <location>
        <begin position="173"/>
        <end position="203"/>
    </location>
</feature>
<feature type="repeat" description="PPR 5">
    <location>
        <begin position="204"/>
        <end position="238"/>
    </location>
</feature>
<feature type="repeat" description="PPR 6">
    <location>
        <begin position="239"/>
        <end position="273"/>
    </location>
</feature>
<feature type="repeat" description="PPR 7">
    <location>
        <begin position="274"/>
        <end position="304"/>
    </location>
</feature>
<feature type="repeat" description="PPR 8">
    <location>
        <begin position="305"/>
        <end position="339"/>
    </location>
</feature>
<feature type="repeat" description="PPR 9">
    <location>
        <begin position="340"/>
        <end position="375"/>
    </location>
</feature>
<feature type="repeat" description="PPR 10">
    <location>
        <begin position="376"/>
        <end position="410"/>
    </location>
</feature>
<feature type="region of interest" description="Type E motif">
    <location>
        <begin position="411"/>
        <end position="486"/>
    </location>
</feature>
<feature type="region of interest" description="Type E(+) motif">
    <location>
        <begin position="487"/>
        <end position="517"/>
    </location>
</feature>
<feature type="region of interest" description="Type DYW motif">
    <location>
        <begin position="518"/>
        <end position="612"/>
    </location>
</feature>
<name>PP410_ARATH</name>
<accession>Q9FND7</accession>
<dbReference type="EMBL" id="AB006702">
    <property type="protein sequence ID" value="BAB11597.1"/>
    <property type="molecule type" value="Genomic_DNA"/>
</dbReference>
<dbReference type="EMBL" id="CP002688">
    <property type="protein sequence ID" value="AED94544.1"/>
    <property type="molecule type" value="Genomic_DNA"/>
</dbReference>
<dbReference type="EMBL" id="CP002688">
    <property type="protein sequence ID" value="ANM70895.1"/>
    <property type="molecule type" value="Genomic_DNA"/>
</dbReference>
<dbReference type="RefSeq" id="NP_001031987.1">
    <property type="nucleotide sequence ID" value="NM_001036910.2"/>
</dbReference>
<dbReference type="RefSeq" id="NP_001318712.1">
    <property type="nucleotide sequence ID" value="NM_001344327.1"/>
</dbReference>
<dbReference type="SMR" id="Q9FND7"/>
<dbReference type="FunCoup" id="Q9FND7">
    <property type="interactions" value="448"/>
</dbReference>
<dbReference type="STRING" id="3702.Q9FND7"/>
<dbReference type="iPTMnet" id="Q9FND7"/>
<dbReference type="PaxDb" id="3702-AT5G40405.1"/>
<dbReference type="ProteomicsDB" id="249291"/>
<dbReference type="EnsemblPlants" id="AT5G40405.1">
    <property type="protein sequence ID" value="AT5G40405.1"/>
    <property type="gene ID" value="AT5G40405"/>
</dbReference>
<dbReference type="EnsemblPlants" id="AT5G40405.2">
    <property type="protein sequence ID" value="AT5G40405.2"/>
    <property type="gene ID" value="AT5G40405"/>
</dbReference>
<dbReference type="GeneID" id="3771385"/>
<dbReference type="Gramene" id="AT5G40405.1">
    <property type="protein sequence ID" value="AT5G40405.1"/>
    <property type="gene ID" value="AT5G40405"/>
</dbReference>
<dbReference type="Gramene" id="AT5G40405.2">
    <property type="protein sequence ID" value="AT5G40405.2"/>
    <property type="gene ID" value="AT5G40405"/>
</dbReference>
<dbReference type="KEGG" id="ath:AT5G40405"/>
<dbReference type="Araport" id="AT5G40405"/>
<dbReference type="TAIR" id="AT5G40405"/>
<dbReference type="eggNOG" id="KOG4197">
    <property type="taxonomic scope" value="Eukaryota"/>
</dbReference>
<dbReference type="HOGENOM" id="CLU_002706_37_2_1"/>
<dbReference type="InParanoid" id="Q9FND7"/>
<dbReference type="OMA" id="NHGIDPW"/>
<dbReference type="PhylomeDB" id="Q9FND7"/>
<dbReference type="PRO" id="PR:Q9FND7"/>
<dbReference type="Proteomes" id="UP000006548">
    <property type="component" value="Chromosome 5"/>
</dbReference>
<dbReference type="ExpressionAtlas" id="Q9FND7">
    <property type="expression patterns" value="baseline and differential"/>
</dbReference>
<dbReference type="GO" id="GO:0003723">
    <property type="term" value="F:RNA binding"/>
    <property type="evidence" value="ECO:0007669"/>
    <property type="project" value="InterPro"/>
</dbReference>
<dbReference type="GO" id="GO:0008270">
    <property type="term" value="F:zinc ion binding"/>
    <property type="evidence" value="ECO:0007669"/>
    <property type="project" value="InterPro"/>
</dbReference>
<dbReference type="GO" id="GO:0009451">
    <property type="term" value="P:RNA modification"/>
    <property type="evidence" value="ECO:0007669"/>
    <property type="project" value="InterPro"/>
</dbReference>
<dbReference type="FunFam" id="1.25.40.10:FF:000184">
    <property type="entry name" value="Pentatricopeptide repeat-containing protein, chloroplastic"/>
    <property type="match status" value="1"/>
</dbReference>
<dbReference type="FunFam" id="1.25.40.10:FF:001912">
    <property type="entry name" value="Putative pentatricopeptide repeat-containing protein isoform A"/>
    <property type="match status" value="1"/>
</dbReference>
<dbReference type="Gene3D" id="1.25.40.10">
    <property type="entry name" value="Tetratricopeptide repeat domain"/>
    <property type="match status" value="3"/>
</dbReference>
<dbReference type="InterPro" id="IPR032867">
    <property type="entry name" value="DYW_dom"/>
</dbReference>
<dbReference type="InterPro" id="IPR046848">
    <property type="entry name" value="E_motif"/>
</dbReference>
<dbReference type="InterPro" id="IPR046849">
    <property type="entry name" value="Eplus_motif"/>
</dbReference>
<dbReference type="InterPro" id="IPR002885">
    <property type="entry name" value="Pentatricopeptide_rpt"/>
</dbReference>
<dbReference type="InterPro" id="IPR046960">
    <property type="entry name" value="PPR_At4g14850-like_plant"/>
</dbReference>
<dbReference type="InterPro" id="IPR011990">
    <property type="entry name" value="TPR-like_helical_dom_sf"/>
</dbReference>
<dbReference type="NCBIfam" id="TIGR00756">
    <property type="entry name" value="PPR"/>
    <property type="match status" value="3"/>
</dbReference>
<dbReference type="PANTHER" id="PTHR47926">
    <property type="entry name" value="PENTATRICOPEPTIDE REPEAT-CONTAINING PROTEIN"/>
    <property type="match status" value="1"/>
</dbReference>
<dbReference type="PANTHER" id="PTHR47926:SF379">
    <property type="entry name" value="TETRATRICOPEPTIDE-LIKE HELICAL DOMAIN SUPERFAMILY"/>
    <property type="match status" value="1"/>
</dbReference>
<dbReference type="Pfam" id="PF14432">
    <property type="entry name" value="DYW_deaminase"/>
    <property type="match status" value="1"/>
</dbReference>
<dbReference type="Pfam" id="PF20431">
    <property type="entry name" value="E_motif"/>
    <property type="match status" value="1"/>
</dbReference>
<dbReference type="Pfam" id="PF20430">
    <property type="entry name" value="Eplus_motif"/>
    <property type="match status" value="1"/>
</dbReference>
<dbReference type="Pfam" id="PF01535">
    <property type="entry name" value="PPR"/>
    <property type="match status" value="4"/>
</dbReference>
<dbReference type="Pfam" id="PF13041">
    <property type="entry name" value="PPR_2"/>
    <property type="match status" value="1"/>
</dbReference>
<dbReference type="SUPFAM" id="SSF48452">
    <property type="entry name" value="TPR-like"/>
    <property type="match status" value="1"/>
</dbReference>
<dbReference type="PROSITE" id="PS51375">
    <property type="entry name" value="PPR"/>
    <property type="match status" value="10"/>
</dbReference>